<protein>
    <recommendedName>
        <fullName evidence="1">Uroporphyrinogen decarboxylase</fullName>
        <shortName evidence="1">UPD</shortName>
        <shortName evidence="1">URO-D</shortName>
        <ecNumber evidence="1">4.1.1.37</ecNumber>
    </recommendedName>
</protein>
<accession>Q73W61</accession>
<gene>
    <name evidence="1" type="primary">hemE</name>
    <name type="ordered locus">MAP_2799c</name>
</gene>
<organism>
    <name type="scientific">Mycolicibacterium paratuberculosis (strain ATCC BAA-968 / K-10)</name>
    <name type="common">Mycobacterium paratuberculosis</name>
    <dbReference type="NCBI Taxonomy" id="262316"/>
    <lineage>
        <taxon>Bacteria</taxon>
        <taxon>Bacillati</taxon>
        <taxon>Actinomycetota</taxon>
        <taxon>Actinomycetes</taxon>
        <taxon>Mycobacteriales</taxon>
        <taxon>Mycobacteriaceae</taxon>
        <taxon>Mycobacterium</taxon>
        <taxon>Mycobacterium avium complex (MAC)</taxon>
    </lineage>
</organism>
<name>DCUP_MYCPA</name>
<sequence length="357" mass="37894">MNSSARTRRDLPESPYLAAVNGRKPHRVPVWFMRQAGRSLPEYRALRAQHDMLSACFDAELVCEITLQPVRRHDVDAAILFSDIVVPLLGAGIDLDIVAGVGPVIASPVRTAADVAAMKPLERQRVQPIADAVRLLVSALVEVPLIGFAGAPFTLASYLIEGGPSRHHARTKAMMLADPDSWHALMEKLTDITVGFLRVQLDAGVDAVQVFDSWAGALSLANYRSYVQPHSARVFAALADYGVPMTHFGVGTAELLGAMSAALKPAPATVVGVDWRTALADAATRVMPGTALQGNLDPVVLLAGWPVVETAARAVVDDGRRAVDAGAAGHVFNLGHGVLPETDPGVLTELVSLVHSL</sequence>
<reference key="1">
    <citation type="journal article" date="2005" name="Proc. Natl. Acad. Sci. U.S.A.">
        <title>The complete genome sequence of Mycobacterium avium subspecies paratuberculosis.</title>
        <authorList>
            <person name="Li L."/>
            <person name="Bannantine J.P."/>
            <person name="Zhang Q."/>
            <person name="Amonsin A."/>
            <person name="May B.J."/>
            <person name="Alt D."/>
            <person name="Banerji N."/>
            <person name="Kanjilal S."/>
            <person name="Kapur V."/>
        </authorList>
    </citation>
    <scope>NUCLEOTIDE SEQUENCE [LARGE SCALE GENOMIC DNA]</scope>
    <source>
        <strain>ATCC BAA-968 / K-10</strain>
    </source>
</reference>
<keyword id="KW-0963">Cytoplasm</keyword>
<keyword id="KW-0210">Decarboxylase</keyword>
<keyword id="KW-0456">Lyase</keyword>
<keyword id="KW-0627">Porphyrin biosynthesis</keyword>
<keyword id="KW-1185">Reference proteome</keyword>
<evidence type="ECO:0000255" key="1">
    <source>
        <dbReference type="HAMAP-Rule" id="MF_00218"/>
    </source>
</evidence>
<dbReference type="EC" id="4.1.1.37" evidence="1"/>
<dbReference type="EMBL" id="AE016958">
    <property type="protein sequence ID" value="AAS05116.1"/>
    <property type="molecule type" value="Genomic_DNA"/>
</dbReference>
<dbReference type="RefSeq" id="WP_003875263.1">
    <property type="nucleotide sequence ID" value="NZ_CP106873.1"/>
</dbReference>
<dbReference type="SMR" id="Q73W61"/>
<dbReference type="STRING" id="262316.MAP_2799c"/>
<dbReference type="KEGG" id="mpa:MAP_2799c"/>
<dbReference type="eggNOG" id="COG0407">
    <property type="taxonomic scope" value="Bacteria"/>
</dbReference>
<dbReference type="HOGENOM" id="CLU_040933_0_1_11"/>
<dbReference type="UniPathway" id="UPA00251">
    <property type="reaction ID" value="UER00321"/>
</dbReference>
<dbReference type="Proteomes" id="UP000000580">
    <property type="component" value="Chromosome"/>
</dbReference>
<dbReference type="GO" id="GO:0005829">
    <property type="term" value="C:cytosol"/>
    <property type="evidence" value="ECO:0007669"/>
    <property type="project" value="TreeGrafter"/>
</dbReference>
<dbReference type="GO" id="GO:0004853">
    <property type="term" value="F:uroporphyrinogen decarboxylase activity"/>
    <property type="evidence" value="ECO:0007669"/>
    <property type="project" value="UniProtKB-UniRule"/>
</dbReference>
<dbReference type="GO" id="GO:0006782">
    <property type="term" value="P:protoporphyrinogen IX biosynthetic process"/>
    <property type="evidence" value="ECO:0007669"/>
    <property type="project" value="UniProtKB-UniRule"/>
</dbReference>
<dbReference type="CDD" id="cd00717">
    <property type="entry name" value="URO-D"/>
    <property type="match status" value="1"/>
</dbReference>
<dbReference type="Gene3D" id="3.20.20.210">
    <property type="match status" value="1"/>
</dbReference>
<dbReference type="HAMAP" id="MF_00218">
    <property type="entry name" value="URO_D"/>
    <property type="match status" value="1"/>
</dbReference>
<dbReference type="InterPro" id="IPR038071">
    <property type="entry name" value="UROD/MetE-like_sf"/>
</dbReference>
<dbReference type="InterPro" id="IPR006361">
    <property type="entry name" value="Uroporphyrinogen_deCO2ase_HemE"/>
</dbReference>
<dbReference type="InterPro" id="IPR000257">
    <property type="entry name" value="Uroporphyrinogen_deCOase"/>
</dbReference>
<dbReference type="NCBIfam" id="TIGR01464">
    <property type="entry name" value="hemE"/>
    <property type="match status" value="1"/>
</dbReference>
<dbReference type="PANTHER" id="PTHR21091">
    <property type="entry name" value="METHYLTETRAHYDROFOLATE:HOMOCYSTEINE METHYLTRANSFERASE RELATED"/>
    <property type="match status" value="1"/>
</dbReference>
<dbReference type="PANTHER" id="PTHR21091:SF169">
    <property type="entry name" value="UROPORPHYRINOGEN DECARBOXYLASE"/>
    <property type="match status" value="1"/>
</dbReference>
<dbReference type="Pfam" id="PF01208">
    <property type="entry name" value="URO-D"/>
    <property type="match status" value="1"/>
</dbReference>
<dbReference type="SUPFAM" id="SSF51726">
    <property type="entry name" value="UROD/MetE-like"/>
    <property type="match status" value="1"/>
</dbReference>
<dbReference type="PROSITE" id="PS00906">
    <property type="entry name" value="UROD_1"/>
    <property type="match status" value="1"/>
</dbReference>
<dbReference type="PROSITE" id="PS00907">
    <property type="entry name" value="UROD_2"/>
    <property type="match status" value="1"/>
</dbReference>
<comment type="function">
    <text evidence="1">Catalyzes the decarboxylation of four acetate groups of uroporphyrinogen-III to yield coproporphyrinogen-III.</text>
</comment>
<comment type="catalytic activity">
    <reaction evidence="1">
        <text>uroporphyrinogen III + 4 H(+) = coproporphyrinogen III + 4 CO2</text>
        <dbReference type="Rhea" id="RHEA:19865"/>
        <dbReference type="ChEBI" id="CHEBI:15378"/>
        <dbReference type="ChEBI" id="CHEBI:16526"/>
        <dbReference type="ChEBI" id="CHEBI:57308"/>
        <dbReference type="ChEBI" id="CHEBI:57309"/>
        <dbReference type="EC" id="4.1.1.37"/>
    </reaction>
</comment>
<comment type="pathway">
    <text evidence="1">Porphyrin-containing compound metabolism; protoporphyrin-IX biosynthesis; coproporphyrinogen-III from 5-aminolevulinate: step 4/4.</text>
</comment>
<comment type="subunit">
    <text evidence="1">Homodimer.</text>
</comment>
<comment type="subcellular location">
    <subcellularLocation>
        <location evidence="1">Cytoplasm</location>
    </subcellularLocation>
</comment>
<comment type="similarity">
    <text evidence="1">Belongs to the uroporphyrinogen decarboxylase family.</text>
</comment>
<feature type="chain" id="PRO_0000325665" description="Uroporphyrinogen decarboxylase">
    <location>
        <begin position="1"/>
        <end position="357"/>
    </location>
</feature>
<feature type="binding site" evidence="1">
    <location>
        <begin position="34"/>
        <end position="38"/>
    </location>
    <ligand>
        <name>substrate</name>
    </ligand>
</feature>
<feature type="binding site" evidence="1">
    <location>
        <position position="83"/>
    </location>
    <ligand>
        <name>substrate</name>
    </ligand>
</feature>
<feature type="binding site" evidence="1">
    <location>
        <position position="158"/>
    </location>
    <ligand>
        <name>substrate</name>
    </ligand>
</feature>
<feature type="binding site" evidence="1">
    <location>
        <position position="213"/>
    </location>
    <ligand>
        <name>substrate</name>
    </ligand>
</feature>
<feature type="binding site" evidence="1">
    <location>
        <position position="336"/>
    </location>
    <ligand>
        <name>substrate</name>
    </ligand>
</feature>
<feature type="site" description="Transition state stabilizer" evidence="1">
    <location>
        <position position="83"/>
    </location>
</feature>
<proteinExistence type="inferred from homology"/>